<organismHost>
    <name type="scientific">Aedes aegypti</name>
    <name type="common">Yellowfever mosquito</name>
    <name type="synonym">Culex aegypti</name>
    <dbReference type="NCBI Taxonomy" id="7159"/>
</organismHost>
<organismHost>
    <name type="scientific">Homo sapiens</name>
    <name type="common">Human</name>
    <dbReference type="NCBI Taxonomy" id="9606"/>
</organismHost>
<comment type="function">
    <text evidence="2 3 6 7 8">RNA-dependent RNA polymerase, which is responsible for the replication and transcription of the viral RNA genome using antigenomic RNA as an intermediate (Probable). During transcription, synthesizes subgenomic RNAs and assures their capping by a cap-snatching mechanism, which involves the endonuclease activity cleaving the host capped pre-mRNAs (By similarity). These short capped RNAs are then used as primers for viral transcription. The 3'-end of subgenomic mRNAs molecules are not polyadenylated. During replication, the polymerase binds the 5' and 3' vRNA extremities at distinct sites (By similarity). In turn, significant conformational changes occur in the polymerase and in vRNA to initiate active RNA synthesis (By similarity). As a consequence of the use of the same enzyme for both transcription and replication, these mechanisms need to be well coordinated (By similarity).</text>
</comment>
<comment type="catalytic activity">
    <reaction evidence="5">
        <text>RNA(n) + a ribonucleoside 5'-triphosphate = RNA(n+1) + diphosphate</text>
        <dbReference type="Rhea" id="RHEA:21248"/>
        <dbReference type="Rhea" id="RHEA-COMP:14527"/>
        <dbReference type="Rhea" id="RHEA-COMP:17342"/>
        <dbReference type="ChEBI" id="CHEBI:33019"/>
        <dbReference type="ChEBI" id="CHEBI:61557"/>
        <dbReference type="ChEBI" id="CHEBI:140395"/>
        <dbReference type="EC" id="2.7.7.48"/>
    </reaction>
</comment>
<comment type="cofactor">
    <cofactor evidence="2">
        <name>Mn(2+)</name>
        <dbReference type="ChEBI" id="CHEBI:29035"/>
    </cofactor>
    <text evidence="2">For endonuclease activity. Binds 2 Mn(2+) ions in the active site (By similarity). The divalent metal ions are crucial for catalytic activity (By similarity).</text>
</comment>
<comment type="cofactor">
    <cofactor evidence="1">
        <name>Mg(2+)</name>
        <dbReference type="ChEBI" id="CHEBI:18420"/>
    </cofactor>
    <cofactor evidence="1">
        <name>Mn(2+)</name>
        <dbReference type="ChEBI" id="CHEBI:29035"/>
    </cofactor>
    <text evidence="1">For polymerase activity. Initiation activity is stronger in the presence of Mn(2+) than in the presence of Mg(2+).</text>
</comment>
<comment type="subunit">
    <text evidence="4 7">Homomultimer (By similarity). Interacts with the glycoprotein N; this interaction allows efficient polymerase packaging into virus particles (By similarity). Interacts with nucleoprotein N (PubMed:19141438).</text>
</comment>
<comment type="subcellular location">
    <subcellularLocation>
        <location evidence="3">Host Golgi apparatus</location>
    </subcellularLocation>
    <subcellularLocation>
        <location evidence="3">Host endoplasmic reticulum</location>
    </subcellularLocation>
    <subcellularLocation>
        <location evidence="3">Host endoplasmic reticulum-Golgi intermediate compartment</location>
    </subcellularLocation>
    <subcellularLocation>
        <location evidence="8">Virion</location>
    </subcellularLocation>
    <subcellularLocation>
        <location evidence="7">Host cytoplasm</location>
    </subcellularLocation>
</comment>
<comment type="domain">
    <text evidence="1 2 3">The N-terminus contains the endonuclease activity (endoN) (By similarity). The central region contains the RdRp activity (By similarity). The C-terminus contains the cap-binding region (By similarity).</text>
</comment>
<comment type="miscellaneous">
    <text evidence="8">Classified as His(+) endonuclease since it has a histidine upstream of the active site that coordinates the first cation.</text>
</comment>
<comment type="similarity">
    <text evidence="8">Belongs to the Bunyavirales RNA polymerase family.</text>
</comment>
<proteinExistence type="evidence at protein level"/>
<evidence type="ECO:0000250" key="1">
    <source>
        <dbReference type="UniProtKB" id="A2SZS3"/>
    </source>
</evidence>
<evidence type="ECO:0000250" key="2">
    <source>
        <dbReference type="UniProtKB" id="A5HC98"/>
    </source>
</evidence>
<evidence type="ECO:0000250" key="3">
    <source>
        <dbReference type="UniProtKB" id="I0DF35"/>
    </source>
</evidence>
<evidence type="ECO:0000250" key="4">
    <source>
        <dbReference type="UniProtKB" id="P27316"/>
    </source>
</evidence>
<evidence type="ECO:0000255" key="5">
    <source>
        <dbReference type="PROSITE-ProRule" id="PRU00539"/>
    </source>
</evidence>
<evidence type="ECO:0000269" key="6">
    <source>
    </source>
</evidence>
<evidence type="ECO:0000269" key="7">
    <source>
    </source>
</evidence>
<evidence type="ECO:0000305" key="8"/>
<dbReference type="EC" id="2.7.7.48" evidence="3"/>
<dbReference type="EC" id="3.1.-.-" evidence="2"/>
<dbReference type="EMBL" id="X14383">
    <property type="protein sequence ID" value="CAA32553.1"/>
    <property type="molecule type" value="Genomic_RNA"/>
</dbReference>
<dbReference type="PIR" id="A33744">
    <property type="entry name" value="RRVUBY"/>
</dbReference>
<dbReference type="RefSeq" id="NP_047211.1">
    <property type="nucleotide sequence ID" value="NC_001925.1"/>
</dbReference>
<dbReference type="SMR" id="P20470"/>
<dbReference type="KEGG" id="vg:2648215"/>
<dbReference type="Proteomes" id="UP000002476">
    <property type="component" value="Genome"/>
</dbReference>
<dbReference type="GO" id="GO:0044165">
    <property type="term" value="C:host cell endoplasmic reticulum"/>
    <property type="evidence" value="ECO:0007669"/>
    <property type="project" value="UniProtKB-SubCell"/>
</dbReference>
<dbReference type="GO" id="GO:0044172">
    <property type="term" value="C:host cell endoplasmic reticulum-Golgi intermediate compartment"/>
    <property type="evidence" value="ECO:0007669"/>
    <property type="project" value="UniProtKB-SubCell"/>
</dbReference>
<dbReference type="GO" id="GO:0044177">
    <property type="term" value="C:host cell Golgi apparatus"/>
    <property type="evidence" value="ECO:0007669"/>
    <property type="project" value="UniProtKB-SubCell"/>
</dbReference>
<dbReference type="GO" id="GO:0044423">
    <property type="term" value="C:virion component"/>
    <property type="evidence" value="ECO:0007669"/>
    <property type="project" value="UniProtKB-KW"/>
</dbReference>
<dbReference type="GO" id="GO:0008234">
    <property type="term" value="F:cysteine-type peptidase activity"/>
    <property type="evidence" value="ECO:0007669"/>
    <property type="project" value="UniProtKB-KW"/>
</dbReference>
<dbReference type="GO" id="GO:0046872">
    <property type="term" value="F:metal ion binding"/>
    <property type="evidence" value="ECO:0007669"/>
    <property type="project" value="UniProtKB-KW"/>
</dbReference>
<dbReference type="GO" id="GO:0000166">
    <property type="term" value="F:nucleotide binding"/>
    <property type="evidence" value="ECO:0007669"/>
    <property type="project" value="UniProtKB-KW"/>
</dbReference>
<dbReference type="GO" id="GO:0003968">
    <property type="term" value="F:RNA-directed RNA polymerase activity"/>
    <property type="evidence" value="ECO:0007669"/>
    <property type="project" value="UniProtKB-KW"/>
</dbReference>
<dbReference type="GO" id="GO:0006351">
    <property type="term" value="P:DNA-templated transcription"/>
    <property type="evidence" value="ECO:0007669"/>
    <property type="project" value="InterPro"/>
</dbReference>
<dbReference type="GO" id="GO:0039689">
    <property type="term" value="P:negative stranded viral RNA replication"/>
    <property type="evidence" value="ECO:0000250"/>
    <property type="project" value="UniProtKB"/>
</dbReference>
<dbReference type="GO" id="GO:0006508">
    <property type="term" value="P:proteolysis"/>
    <property type="evidence" value="ECO:0007669"/>
    <property type="project" value="UniProtKB-KW"/>
</dbReference>
<dbReference type="GO" id="GO:0039696">
    <property type="term" value="P:RNA-templated viral transcription"/>
    <property type="evidence" value="ECO:0000250"/>
    <property type="project" value="UniProtKB"/>
</dbReference>
<dbReference type="CDD" id="cd22349">
    <property type="entry name" value="PDDEXK_RNA_polymerase-like"/>
    <property type="match status" value="1"/>
</dbReference>
<dbReference type="Gene3D" id="3.40.91.60">
    <property type="match status" value="1"/>
</dbReference>
<dbReference type="InterPro" id="IPR048006">
    <property type="entry name" value="CapSnatch_bunyavir"/>
</dbReference>
<dbReference type="InterPro" id="IPR029124">
    <property type="entry name" value="L_protein_N"/>
</dbReference>
<dbReference type="InterPro" id="IPR048547">
    <property type="entry name" value="L_thumb_ring_bunyavir"/>
</dbReference>
<dbReference type="InterPro" id="IPR007099">
    <property type="entry name" value="RNA-dir_pol_NSvirus"/>
</dbReference>
<dbReference type="InterPro" id="IPR014384">
    <property type="entry name" value="RNA-dir_pol_orthobunyavirus"/>
</dbReference>
<dbReference type="InterPro" id="IPR007322">
    <property type="entry name" value="RNA_pol_bunyavir"/>
</dbReference>
<dbReference type="NCBIfam" id="TIGR04202">
    <property type="entry name" value="capSnatchArena"/>
    <property type="match status" value="1"/>
</dbReference>
<dbReference type="Pfam" id="PF04196">
    <property type="entry name" value="Bunya_RdRp"/>
    <property type="match status" value="1"/>
</dbReference>
<dbReference type="Pfam" id="PF15518">
    <property type="entry name" value="L_protein_N"/>
    <property type="match status" value="1"/>
</dbReference>
<dbReference type="Pfam" id="PF21561">
    <property type="entry name" value="L_thumb_ring_vir"/>
    <property type="match status" value="1"/>
</dbReference>
<dbReference type="PIRSF" id="PIRSF000824">
    <property type="entry name" value="L_OrthobunV"/>
    <property type="match status" value="1"/>
</dbReference>
<dbReference type="PROSITE" id="PS50525">
    <property type="entry name" value="RDRP_SSRNA_NEG_SEG"/>
    <property type="match status" value="1"/>
</dbReference>
<protein>
    <recommendedName>
        <fullName>RNA-directed RNA polymerase L</fullName>
        <shortName>Protein L</shortName>
        <ecNumber evidence="3">2.7.7.48</ecNumber>
    </recommendedName>
    <alternativeName>
        <fullName>Large structural protein</fullName>
    </alternativeName>
    <alternativeName>
        <fullName>Replicase</fullName>
    </alternativeName>
    <alternativeName>
        <fullName>Transcriptase</fullName>
    </alternativeName>
    <domain>
        <recommendedName>
            <fullName>cap-snatching endonuclease</fullName>
            <ecNumber evidence="2">3.1.-.-</ecNumber>
        </recommendedName>
    </domain>
</protein>
<name>L_BUNYW</name>
<gene>
    <name type="primary">L</name>
</gene>
<feature type="chain" id="PRO_0000222020" description="RNA-directed RNA polymerase L">
    <location>
        <begin position="1"/>
        <end position="2238"/>
    </location>
</feature>
<feature type="domain" description="RdRp catalytic" evidence="5">
    <location>
        <begin position="1016"/>
        <end position="1207"/>
    </location>
</feature>
<feature type="binding site" evidence="2">
    <location>
        <position position="34"/>
    </location>
    <ligand>
        <name>Mn(2+)</name>
        <dbReference type="ChEBI" id="CHEBI:29035"/>
        <label>1</label>
    </ligand>
</feature>
<feature type="binding site" evidence="2">
    <location>
        <position position="79"/>
    </location>
    <ligand>
        <name>Mn(2+)</name>
        <dbReference type="ChEBI" id="CHEBI:29035"/>
        <label>1</label>
    </ligand>
</feature>
<feature type="binding site" evidence="2">
    <location>
        <position position="79"/>
    </location>
    <ligand>
        <name>Mn(2+)</name>
        <dbReference type="ChEBI" id="CHEBI:29035"/>
        <label>2</label>
    </ligand>
</feature>
<feature type="binding site" evidence="2">
    <location>
        <position position="92"/>
    </location>
    <ligand>
        <name>Mn(2+)</name>
        <dbReference type="ChEBI" id="CHEBI:29035"/>
        <label>1</label>
    </ligand>
</feature>
<feature type="binding site" evidence="2">
    <location>
        <position position="93"/>
    </location>
    <ligand>
        <name>Mn(2+)</name>
        <dbReference type="ChEBI" id="CHEBI:29035"/>
        <label>1</label>
    </ligand>
</feature>
<keyword id="KW-1035">Host cytoplasm</keyword>
<keyword id="KW-1038">Host endoplasmic reticulum</keyword>
<keyword id="KW-1040">Host Golgi apparatus</keyword>
<keyword id="KW-0378">Hydrolase</keyword>
<keyword id="KW-0460">Magnesium</keyword>
<keyword id="KW-0464">Manganese</keyword>
<keyword id="KW-0479">Metal-binding</keyword>
<keyword id="KW-0547">Nucleotide-binding</keyword>
<keyword id="KW-0548">Nucleotidyltransferase</keyword>
<keyword id="KW-0645">Protease</keyword>
<keyword id="KW-1185">Reference proteome</keyword>
<keyword id="KW-0696">RNA-directed RNA polymerase</keyword>
<keyword id="KW-0788">Thiol protease</keyword>
<keyword id="KW-0808">Transferase</keyword>
<keyword id="KW-0833">Ubl conjugation pathway</keyword>
<keyword id="KW-0693">Viral RNA replication</keyword>
<keyword id="KW-0946">Virion</keyword>
<accession>P20470</accession>
<reference key="1">
    <citation type="journal article" date="1989" name="Virology">
        <title>Nucleotide sequence analysis of the large (L) genomic RNA segment of Bunyamwera virus, the prototype of the family Bunyaviridae.</title>
        <authorList>
            <person name="Elliott R.M."/>
        </authorList>
    </citation>
    <scope>NUCLEOTIDE SEQUENCE [GENOMIC RNA]</scope>
</reference>
<reference key="2">
    <citation type="journal article" date="2003" name="Virology">
        <title>Rescue of Hantaan virus minigenomes.</title>
        <authorList>
            <person name="Flick K."/>
            <person name="Hooper J.W."/>
            <person name="Schmaljohn C.S."/>
            <person name="Pettersson R.F."/>
            <person name="Feldmann H."/>
            <person name="Flick R."/>
        </authorList>
    </citation>
    <scope>FUNCTION</scope>
</reference>
<reference key="3">
    <citation type="journal article" date="2009" name="J. Gen. Virol.">
        <title>Generation and analysis of recombinant Bunyamwera orthobunyaviruses expressing V5 epitope-tagged L proteins.</title>
        <authorList>
            <person name="Shi X."/>
            <person name="Elliott R.M."/>
        </authorList>
    </citation>
    <scope>FUNCTION</scope>
    <scope>INTERACTION WITH N</scope>
    <scope>SUBCELLULAR LOCATION</scope>
</reference>
<reference key="4">
    <citation type="journal article" date="2017" name="Crit. Rev. Microbiol.">
        <title>Bunyaviridae RdRps: structure, motifs, and RNA synthesis machinery.</title>
        <authorList>
            <person name="Amroun A."/>
            <person name="Priet S."/>
            <person name="de Lamballerie X."/>
            <person name="Querat G."/>
        </authorList>
    </citation>
    <scope>REVIEW</scope>
</reference>
<reference key="5">
    <citation type="journal article" date="2020" name="Trends Microbiol.">
        <title>The Cap-Snatching Mechanism of Bunyaviruses.</title>
        <authorList>
            <person name="Olschewski S."/>
            <person name="Cusack S."/>
            <person name="Rosenthal M."/>
        </authorList>
    </citation>
    <scope>REVIEW</scope>
</reference>
<organism>
    <name type="scientific">Bunyamwera virus</name>
    <name type="common">BUNV</name>
    <dbReference type="NCBI Taxonomy" id="35304"/>
    <lineage>
        <taxon>Viruses</taxon>
        <taxon>Riboviria</taxon>
        <taxon>Orthornavirae</taxon>
        <taxon>Negarnaviricota</taxon>
        <taxon>Polyploviricotina</taxon>
        <taxon>Ellioviricetes</taxon>
        <taxon>Bunyavirales</taxon>
        <taxon>Peribunyaviridae</taxon>
        <taxon>Orthobunyavirus</taxon>
        <taxon>Orthobunyavirus bunyamweraense</taxon>
    </lineage>
</organism>
<sequence>MEDQAYDQYLHRIQAARTATVAKDISADILEARHDYFGRELCNSLGIEYKNNVLLDEIILDVVPGVNLLNYNIPNVTPDNYIWDGHFLIILDYKVSVGNDSSEITYKKYTSLILPVMSELGIDTEIAIIRANPVTYQISIIGEEFKQRFPNIPIQLDFGRFFELRKMLLDKFADDEEFLMMIAHGDFTLTAPWCTSDTPELEEHEIFQEFINSMPPRFVSLFKEAVNFSAYSSERWNTFLYRARAETEVDYNQFLSDKAHKIFMLEGDYMRPTQAEIDKGWELMSQRVYTEREIITDVTKQKPSIHFIWVKNADRKLIGSTAKLIYLSNSLQSITEQSTWTDALKAIGKSMDIDGKVGQYETLCAERKMIARSTGKKVDNKRLEAVKIGNALVLWEQQFILANDLFKNQERQKFMKNFFGIGKHKSFKDKTSSDIETDKPKILDFNNTIVLMAARTMVNKNKALLAKDNTLQDLHPIIMQYASEIKEASKDTFDALLKISKTCFWQCIVDVSTIMRNILAVSQYNRHNTFRVAMCANDSVYALVFPSSDIKTKRATVVFSIVCMHKEKNDLMDAGALFTTLECKNKEYISISKAIRLDKERCQRIVSSPGLFILSSMLLYNNNPEVNLVDVLNFTFYTSLSITKSMLSLTEPSRYMIMNSLAISSHVRDYIAEKFSPYTKTLFSVYMVNLIKRGCASANEQSSKIQLRNIYLSDYDITQKGVNDGRNLDSIWFPGKVNLKEYINQIYLPFYFNAKGLHEKHHVMIDLAKTVLEIEMNQRSDNLGIWSKAEKKQHVNLPILIHSIAKSLILDTSRHNHLRNRVESRNNFRRSITTISTFTSSKSCIKIGDFREIKDKETEKSKKSTEKFDKKFRLSNPLFLEDEEANLEVQHCNYRALIQKIPNYKDYISVKVFDRLYELLKNGVLTDKPFIELAMEMMKNHKEFSFTFFNKGQKTAKDREIFVGEFEAKMCMYVVERISKERCKLNTDEMISEPGDSKLKILEKKAEEEIRYIVERTKDSIIKGDPSKALKLEINADMSKWSAQDVFYKYFWLIAMDPILYPAEKTRILYFMCNYMQKLLILPDDLIANILDQKRPYNDDLILEMTNGLNYNYVQIKRNWLQGNFNYISSYVHSCAMLVYKDILKECMKLLDGDCLINSMVHSDDNQTSLAIIQNKVSDQIVIQYAANTFESVCLTFGCQANMKKTYITHTCKEFVSLFNLHGEPLSVFGRFLLPSVGDCAYIGPYEDLASRLSAAQQSLKHGCPPSLVWLAISCSHWITFFTYNMLDDQINAPQQHLPFNNRKEIPVELNGYLNAPLYLIALVGLEAGNLWFLINILKKLVPLDKQKETIQSQCLHLCNSIDKLTESEKFKLKILRYLTLDTEMSVDNNMGETSDMRSRSLLTPRKFTTLGSLNKLVSYNDFRSSLDDQRFTDNLNFMLNNPELLVTKGENKEQFMQSVLFRYNSKRFKESLSIQNPAQLFIEQILFSHKPIIDYSSIFDKLTSLAEADIIEELPEIIGRVTFPQAYQMINRDIGQLPLDIDDIKLIFRYCILNDPLMITAANTSLLCVKGTPQDRTGLSASQMPEFRNMKLIHHSPALVLKAFSKGTSDIPGADPIELEKDLHHLNEFVETTAIKEKILHNIDNPPKHLIGNEILIYRIREMTKLYQVCYDYVKSTEHKVKIFILPMKSYTAIDFCTLIQGNTISDNKWYTMHYLKQIASGSIKGNIVTTSTSEQIIANECFRVLCHFADSFVEEASRLSFINEVLDNFTYKNISVNSLFNTLLASTTRLDFIPLLFRLKVLTQTDLNRFDALKTNERVSWNNWQTNRSLNSGLIDLTISGYLRSIRVVGEDNKLKIAELTIPNFYPNTVFHAGNKLLNSRHGLKFEYMEEIVLDEKYNYYITYQKKRAHIYTYQVSTIEHILRRNNEGLQSRGPRYNKMVPVCPVVLSVRDELFRMSLENVFSLNMTNFSMSRLFVSPDEVATVKKAHMSKMMFFSGPTIKAGIINLTSLMRTQELLTLNYDNLCKSSIVPFCRILECNGDEQGELIFLSDEVMDFTISEEIESMPLFTIRYQKRGTEIMTYKNAIMKLVSAGVDEIKEVFDFSKQGFYSKKNLGIINTICSIINILETNEWSTILYNSFHIAMLLESMDREFHMFTLPEAFFINVAGGVVNWTKLLKFIKSLPVIEQEPWSMMMSRFVEKTVYLIEREMNKDVDFTDFLDELEFSSGKSLFTFF</sequence>